<dbReference type="EC" id="1.2.1.41" evidence="1"/>
<dbReference type="EMBL" id="AL596168">
    <property type="protein sequence ID" value="CAC96458.1"/>
    <property type="molecule type" value="Genomic_DNA"/>
</dbReference>
<dbReference type="PIR" id="AB1586">
    <property type="entry name" value="AB1586"/>
</dbReference>
<dbReference type="RefSeq" id="WP_010990842.1">
    <property type="nucleotide sequence ID" value="NC_003212.1"/>
</dbReference>
<dbReference type="SMR" id="Q92CE5"/>
<dbReference type="STRING" id="272626.gene:17565558"/>
<dbReference type="KEGG" id="lin:proA"/>
<dbReference type="eggNOG" id="COG0014">
    <property type="taxonomic scope" value="Bacteria"/>
</dbReference>
<dbReference type="HOGENOM" id="CLU_030231_0_0_9"/>
<dbReference type="OrthoDB" id="9809970at2"/>
<dbReference type="UniPathway" id="UPA00098">
    <property type="reaction ID" value="UER00360"/>
</dbReference>
<dbReference type="Proteomes" id="UP000002513">
    <property type="component" value="Chromosome"/>
</dbReference>
<dbReference type="GO" id="GO:0005737">
    <property type="term" value="C:cytoplasm"/>
    <property type="evidence" value="ECO:0007669"/>
    <property type="project" value="UniProtKB-SubCell"/>
</dbReference>
<dbReference type="GO" id="GO:0004350">
    <property type="term" value="F:glutamate-5-semialdehyde dehydrogenase activity"/>
    <property type="evidence" value="ECO:0007669"/>
    <property type="project" value="UniProtKB-UniRule"/>
</dbReference>
<dbReference type="GO" id="GO:0050661">
    <property type="term" value="F:NADP binding"/>
    <property type="evidence" value="ECO:0007669"/>
    <property type="project" value="InterPro"/>
</dbReference>
<dbReference type="GO" id="GO:0055129">
    <property type="term" value="P:L-proline biosynthetic process"/>
    <property type="evidence" value="ECO:0007669"/>
    <property type="project" value="UniProtKB-UniRule"/>
</dbReference>
<dbReference type="CDD" id="cd07079">
    <property type="entry name" value="ALDH_F18-19_ProA-GPR"/>
    <property type="match status" value="1"/>
</dbReference>
<dbReference type="FunFam" id="3.40.309.10:FF:000006">
    <property type="entry name" value="Gamma-glutamyl phosphate reductase"/>
    <property type="match status" value="1"/>
</dbReference>
<dbReference type="Gene3D" id="3.40.605.10">
    <property type="entry name" value="Aldehyde Dehydrogenase, Chain A, domain 1"/>
    <property type="match status" value="1"/>
</dbReference>
<dbReference type="Gene3D" id="3.40.309.10">
    <property type="entry name" value="Aldehyde Dehydrogenase, Chain A, domain 2"/>
    <property type="match status" value="1"/>
</dbReference>
<dbReference type="HAMAP" id="MF_00412">
    <property type="entry name" value="ProA"/>
    <property type="match status" value="1"/>
</dbReference>
<dbReference type="InterPro" id="IPR016161">
    <property type="entry name" value="Ald_DH/histidinol_DH"/>
</dbReference>
<dbReference type="InterPro" id="IPR016163">
    <property type="entry name" value="Ald_DH_C"/>
</dbReference>
<dbReference type="InterPro" id="IPR016162">
    <property type="entry name" value="Ald_DH_N"/>
</dbReference>
<dbReference type="InterPro" id="IPR015590">
    <property type="entry name" value="Aldehyde_DH_dom"/>
</dbReference>
<dbReference type="InterPro" id="IPR020593">
    <property type="entry name" value="G-glutamylP_reductase_CS"/>
</dbReference>
<dbReference type="InterPro" id="IPR012134">
    <property type="entry name" value="Glu-5-SA_DH"/>
</dbReference>
<dbReference type="InterPro" id="IPR000965">
    <property type="entry name" value="GPR_dom"/>
</dbReference>
<dbReference type="NCBIfam" id="NF001221">
    <property type="entry name" value="PRK00197.1"/>
    <property type="match status" value="1"/>
</dbReference>
<dbReference type="NCBIfam" id="TIGR00407">
    <property type="entry name" value="proA"/>
    <property type="match status" value="1"/>
</dbReference>
<dbReference type="PANTHER" id="PTHR11063:SF8">
    <property type="entry name" value="DELTA-1-PYRROLINE-5-CARBOXYLATE SYNTHASE"/>
    <property type="match status" value="1"/>
</dbReference>
<dbReference type="PANTHER" id="PTHR11063">
    <property type="entry name" value="GLUTAMATE SEMIALDEHYDE DEHYDROGENASE"/>
    <property type="match status" value="1"/>
</dbReference>
<dbReference type="Pfam" id="PF00171">
    <property type="entry name" value="Aldedh"/>
    <property type="match status" value="1"/>
</dbReference>
<dbReference type="PIRSF" id="PIRSF000151">
    <property type="entry name" value="GPR"/>
    <property type="match status" value="1"/>
</dbReference>
<dbReference type="SUPFAM" id="SSF53720">
    <property type="entry name" value="ALDH-like"/>
    <property type="match status" value="1"/>
</dbReference>
<dbReference type="PROSITE" id="PS01223">
    <property type="entry name" value="PROA"/>
    <property type="match status" value="1"/>
</dbReference>
<comment type="function">
    <text evidence="1">Catalyzes the NADPH-dependent reduction of L-glutamate 5-phosphate into L-glutamate 5-semialdehyde and phosphate. The product spontaneously undergoes cyclization to form 1-pyrroline-5-carboxylate.</text>
</comment>
<comment type="catalytic activity">
    <reaction evidence="1">
        <text>L-glutamate 5-semialdehyde + phosphate + NADP(+) = L-glutamyl 5-phosphate + NADPH + H(+)</text>
        <dbReference type="Rhea" id="RHEA:19541"/>
        <dbReference type="ChEBI" id="CHEBI:15378"/>
        <dbReference type="ChEBI" id="CHEBI:43474"/>
        <dbReference type="ChEBI" id="CHEBI:57783"/>
        <dbReference type="ChEBI" id="CHEBI:58066"/>
        <dbReference type="ChEBI" id="CHEBI:58274"/>
        <dbReference type="ChEBI" id="CHEBI:58349"/>
        <dbReference type="EC" id="1.2.1.41"/>
    </reaction>
</comment>
<comment type="pathway">
    <text evidence="1">Amino-acid biosynthesis; L-proline biosynthesis; L-glutamate 5-semialdehyde from L-glutamate: step 2/2.</text>
</comment>
<comment type="subcellular location">
    <subcellularLocation>
        <location evidence="1">Cytoplasm</location>
    </subcellularLocation>
</comment>
<comment type="similarity">
    <text evidence="1">Belongs to the gamma-glutamyl phosphate reductase family.</text>
</comment>
<proteinExistence type="inferred from homology"/>
<feature type="chain" id="PRO_0000189744" description="Gamma-glutamyl phosphate reductase">
    <location>
        <begin position="1"/>
        <end position="415"/>
    </location>
</feature>
<protein>
    <recommendedName>
        <fullName evidence="1">Gamma-glutamyl phosphate reductase</fullName>
        <shortName evidence="1">GPR</shortName>
        <ecNumber evidence="1">1.2.1.41</ecNumber>
    </recommendedName>
    <alternativeName>
        <fullName evidence="1">Glutamate-5-semialdehyde dehydrogenase</fullName>
    </alternativeName>
    <alternativeName>
        <fullName evidence="1">Glutamyl-gamma-semialdehyde dehydrogenase</fullName>
        <shortName evidence="1">GSA dehydrogenase</shortName>
    </alternativeName>
</protein>
<keyword id="KW-0028">Amino-acid biosynthesis</keyword>
<keyword id="KW-0963">Cytoplasm</keyword>
<keyword id="KW-0521">NADP</keyword>
<keyword id="KW-0560">Oxidoreductase</keyword>
<keyword id="KW-0641">Proline biosynthesis</keyword>
<reference key="1">
    <citation type="journal article" date="2001" name="Science">
        <title>Comparative genomics of Listeria species.</title>
        <authorList>
            <person name="Glaser P."/>
            <person name="Frangeul L."/>
            <person name="Buchrieser C."/>
            <person name="Rusniok C."/>
            <person name="Amend A."/>
            <person name="Baquero F."/>
            <person name="Berche P."/>
            <person name="Bloecker H."/>
            <person name="Brandt P."/>
            <person name="Chakraborty T."/>
            <person name="Charbit A."/>
            <person name="Chetouani F."/>
            <person name="Couve E."/>
            <person name="de Daruvar A."/>
            <person name="Dehoux P."/>
            <person name="Domann E."/>
            <person name="Dominguez-Bernal G."/>
            <person name="Duchaud E."/>
            <person name="Durant L."/>
            <person name="Dussurget O."/>
            <person name="Entian K.-D."/>
            <person name="Fsihi H."/>
            <person name="Garcia-del Portillo F."/>
            <person name="Garrido P."/>
            <person name="Gautier L."/>
            <person name="Goebel W."/>
            <person name="Gomez-Lopez N."/>
            <person name="Hain T."/>
            <person name="Hauf J."/>
            <person name="Jackson D."/>
            <person name="Jones L.-M."/>
            <person name="Kaerst U."/>
            <person name="Kreft J."/>
            <person name="Kuhn M."/>
            <person name="Kunst F."/>
            <person name="Kurapkat G."/>
            <person name="Madueno E."/>
            <person name="Maitournam A."/>
            <person name="Mata Vicente J."/>
            <person name="Ng E."/>
            <person name="Nedjari H."/>
            <person name="Nordsiek G."/>
            <person name="Novella S."/>
            <person name="de Pablos B."/>
            <person name="Perez-Diaz J.-C."/>
            <person name="Purcell R."/>
            <person name="Remmel B."/>
            <person name="Rose M."/>
            <person name="Schlueter T."/>
            <person name="Simoes N."/>
            <person name="Tierrez A."/>
            <person name="Vazquez-Boland J.-A."/>
            <person name="Voss H."/>
            <person name="Wehland J."/>
            <person name="Cossart P."/>
        </authorList>
    </citation>
    <scope>NUCLEOTIDE SEQUENCE [LARGE SCALE GENOMIC DNA]</scope>
    <source>
        <strain>ATCC BAA-680 / CLIP 11262</strain>
    </source>
</reference>
<evidence type="ECO:0000255" key="1">
    <source>
        <dbReference type="HAMAP-Rule" id="MF_00412"/>
    </source>
</evidence>
<organism>
    <name type="scientific">Listeria innocua serovar 6a (strain ATCC BAA-680 / CLIP 11262)</name>
    <dbReference type="NCBI Taxonomy" id="272626"/>
    <lineage>
        <taxon>Bacteria</taxon>
        <taxon>Bacillati</taxon>
        <taxon>Bacillota</taxon>
        <taxon>Bacilli</taxon>
        <taxon>Bacillales</taxon>
        <taxon>Listeriaceae</taxon>
        <taxon>Listeria</taxon>
    </lineage>
</organism>
<gene>
    <name evidence="1" type="primary">proA</name>
    <name type="ordered locus">lin1227</name>
</gene>
<sequence length="415" mass="45454">MTELIKKGSAAKEASQFLAQASTKQKNAALLNLSNDLLAHTASLLQENNKDIIRAREKGTPETMIDRLRLTEERIKEISDAVKQVVALKDPIGEVTNMWKNEAELTIGKTRVPLGVIGIIYESRPNVTVDASVLCFKTGNAVILRGGSDAIDSNKALMSVIQDSLAASGFPRSSVQLIEDTSRETARDMMRLNRFLDVLIPRGGAKLIQTVLENATVPVIETGTGNCHIYVDKAAEKQMAIDILVNAKCSRPSVCNAAETLLIHRDVAEAFLPEMETALKEYNVELRADERAREILKDSKAATESDWEDEFLDFILAIKVVDSVDEAINHINKYGTKHSEAIISNDYATGQAFHQKVDAAAVYINASTRFTDGFAMGFGAEIGISTQKLHARGPMGLTELTSTKYIIFGDGQIRN</sequence>
<accession>Q92CE5</accession>
<name>PROA_LISIN</name>